<organism>
    <name type="scientific">Rattus norvegicus</name>
    <name type="common">Rat</name>
    <dbReference type="NCBI Taxonomy" id="10116"/>
    <lineage>
        <taxon>Eukaryota</taxon>
        <taxon>Metazoa</taxon>
        <taxon>Chordata</taxon>
        <taxon>Craniata</taxon>
        <taxon>Vertebrata</taxon>
        <taxon>Euteleostomi</taxon>
        <taxon>Mammalia</taxon>
        <taxon>Eutheria</taxon>
        <taxon>Euarchontoglires</taxon>
        <taxon>Glires</taxon>
        <taxon>Rodentia</taxon>
        <taxon>Myomorpha</taxon>
        <taxon>Muroidea</taxon>
        <taxon>Muridae</taxon>
        <taxon>Murinae</taxon>
        <taxon>Rattus</taxon>
    </lineage>
</organism>
<sequence length="319" mass="35131">MAVQACALSLRLGLWMSLLLPVLPGAGARAAGARWSGEGTTPHLQSIFLGRCAEYTTLLSLEPGNKNCTAIWEAFKVVLDKDPCSVLPSDYDLFINLSRHAIPRDKSLFWENNHLLVMSYAENTRRLMPLCDVLYGKVGDFLSWCRQENASGLDYQSCPTAEDCENNAVDAYWKSASMQYSRDSSGVINVMLNGSEPKGAYPTKGFFADFEIPYLQKDKITRIEIWVMHEVGGPHVESCGEGSVKILEDRLEALGFQHSCINDYPPVKFLMCVDHSTHPDCAMNSASASMWRESPALHAIGDISLIISLLVALASSSQA</sequence>
<gene>
    <name type="primary">Bst1</name>
</gene>
<protein>
    <recommendedName>
        <fullName>ADP-ribosyl cyclase/cyclic ADP-ribose hydrolase 2</fullName>
        <ecNumber evidence="1">3.2.2.6</ecNumber>
    </recommendedName>
    <alternativeName>
        <fullName>ADP-ribosyl cyclase 2</fullName>
    </alternativeName>
    <alternativeName>
        <fullName>Bone marrow stromal antigen 1</fullName>
        <shortName>BST-1</shortName>
    </alternativeName>
    <alternativeName>
        <fullName>Cyclic ADP-ribose hydrolase 2</fullName>
        <shortName>cADPR hydrolase 2</shortName>
    </alternativeName>
    <cdAntigenName>CD157</cdAntigenName>
</protein>
<keyword id="KW-1003">Cell membrane</keyword>
<keyword id="KW-1015">Disulfide bond</keyword>
<keyword id="KW-0325">Glycoprotein</keyword>
<keyword id="KW-0336">GPI-anchor</keyword>
<keyword id="KW-0378">Hydrolase</keyword>
<keyword id="KW-0449">Lipoprotein</keyword>
<keyword id="KW-0472">Membrane</keyword>
<keyword id="KW-0520">NAD</keyword>
<keyword id="KW-1185">Reference proteome</keyword>
<keyword id="KW-0732">Signal</keyword>
<keyword id="KW-0808">Transferase</keyword>
<proteinExistence type="evidence at transcript level"/>
<comment type="function">
    <text evidence="1">Catalyzes both the synthesis of cyclic ADP-beta-D-ribose (cADPR) from NAD(+), and its hydrolysis to ADP-D-ribose (ADPR). Cyclic ADPR is known to serve as an endogenous second messenger that elicits calcium release from intracellular stores, and thus regulates the mobilization of intracellular calcium. May be involved in pre-B-cell growth.</text>
</comment>
<comment type="catalytic activity">
    <reaction evidence="1">
        <text>NAD(+) + H2O = ADP-D-ribose + nicotinamide + H(+)</text>
        <dbReference type="Rhea" id="RHEA:16301"/>
        <dbReference type="ChEBI" id="CHEBI:15377"/>
        <dbReference type="ChEBI" id="CHEBI:15378"/>
        <dbReference type="ChEBI" id="CHEBI:17154"/>
        <dbReference type="ChEBI" id="CHEBI:57540"/>
        <dbReference type="ChEBI" id="CHEBI:57967"/>
        <dbReference type="EC" id="3.2.2.6"/>
    </reaction>
    <physiologicalReaction direction="left-to-right" evidence="1">
        <dbReference type="Rhea" id="RHEA:16302"/>
    </physiologicalReaction>
</comment>
<comment type="catalytic activity">
    <reaction evidence="1">
        <text>NAD(+) = cyclic ADP-beta-D-ribose + nicotinamide + H(+)</text>
        <dbReference type="Rhea" id="RHEA:38611"/>
        <dbReference type="ChEBI" id="CHEBI:15378"/>
        <dbReference type="ChEBI" id="CHEBI:17154"/>
        <dbReference type="ChEBI" id="CHEBI:57540"/>
        <dbReference type="ChEBI" id="CHEBI:73672"/>
    </reaction>
    <physiologicalReaction direction="left-to-right" evidence="1">
        <dbReference type="Rhea" id="RHEA:38612"/>
    </physiologicalReaction>
</comment>
<comment type="catalytic activity">
    <reaction evidence="1">
        <text>cyclic ADP-beta-D-ribose + H2O = ADP-D-ribose</text>
        <dbReference type="Rhea" id="RHEA:38615"/>
        <dbReference type="ChEBI" id="CHEBI:15377"/>
        <dbReference type="ChEBI" id="CHEBI:57967"/>
        <dbReference type="ChEBI" id="CHEBI:73672"/>
    </reaction>
    <physiologicalReaction direction="left-to-right" evidence="1">
        <dbReference type="Rhea" id="RHEA:38616"/>
    </physiologicalReaction>
</comment>
<comment type="subunit">
    <text evidence="1">Homodimer.</text>
</comment>
<comment type="subcellular location">
    <subcellularLocation>
        <location evidence="1">Cell membrane</location>
        <topology evidence="1">Lipid-anchor</topology>
        <topology evidence="1">GPI-anchor</topology>
    </subcellularLocation>
</comment>
<comment type="tissue specificity">
    <text>Pancreatic islets, kidney, spleen, heart, thymus, intestine and salivary gland.</text>
</comment>
<comment type="similarity">
    <text evidence="3">Belongs to the ADP-ribosyl cyclase family.</text>
</comment>
<name>BST1_RAT</name>
<feature type="signal peptide" evidence="2">
    <location>
        <begin position="1"/>
        <end position="33"/>
    </location>
</feature>
<feature type="chain" id="PRO_0000004036" description="ADP-ribosyl cyclase/cyclic ADP-ribose hydrolase 2">
    <location>
        <begin position="34"/>
        <end position="294"/>
    </location>
</feature>
<feature type="propeptide" id="PRO_0000004037" evidence="2">
    <location>
        <begin position="295"/>
        <end position="319"/>
    </location>
</feature>
<feature type="binding site" evidence="1">
    <location>
        <position position="110"/>
    </location>
    <ligand>
        <name>NAD(+)</name>
        <dbReference type="ChEBI" id="CHEBI:57540"/>
    </ligand>
</feature>
<feature type="binding site" evidence="1">
    <location>
        <position position="110"/>
    </location>
    <ligand>
        <name>nicotinamide</name>
        <dbReference type="ChEBI" id="CHEBI:17154"/>
    </ligand>
</feature>
<feature type="binding site" evidence="1">
    <location>
        <position position="173"/>
    </location>
    <ligand>
        <name>NAD(+)</name>
        <dbReference type="ChEBI" id="CHEBI:57540"/>
    </ligand>
</feature>
<feature type="binding site" evidence="1">
    <location>
        <position position="211"/>
    </location>
    <ligand>
        <name>NAD(+)</name>
        <dbReference type="ChEBI" id="CHEBI:57540"/>
    </ligand>
</feature>
<feature type="lipid moiety-binding region" description="GPI-anchor amidated serine" evidence="2">
    <location>
        <position position="294"/>
    </location>
</feature>
<feature type="glycosylation site" description="N-linked (GlcNAc...) asparagine" evidence="2">
    <location>
        <position position="67"/>
    </location>
</feature>
<feature type="glycosylation site" description="N-linked (GlcNAc...) asparagine" evidence="2">
    <location>
        <position position="96"/>
    </location>
</feature>
<feature type="glycosylation site" description="N-linked (GlcNAc...) asparagine" evidence="2">
    <location>
        <position position="149"/>
    </location>
</feature>
<feature type="glycosylation site" description="N-linked (GlcNAc...) asparagine" evidence="2">
    <location>
        <position position="193"/>
    </location>
</feature>
<feature type="disulfide bond" evidence="1">
    <location>
        <begin position="52"/>
        <end position="68"/>
    </location>
</feature>
<feature type="disulfide bond" evidence="1">
    <location>
        <begin position="84"/>
        <end position="164"/>
    </location>
</feature>
<feature type="disulfide bond" evidence="1">
    <location>
        <begin position="145"/>
        <end position="158"/>
    </location>
</feature>
<feature type="disulfide bond" evidence="1">
    <location>
        <begin position="239"/>
        <end position="260"/>
    </location>
</feature>
<feature type="disulfide bond" evidence="1">
    <location>
        <begin position="272"/>
        <end position="281"/>
    </location>
</feature>
<dbReference type="EC" id="3.2.2.6" evidence="1"/>
<dbReference type="EMBL" id="D49955">
    <property type="protein sequence ID" value="BAA08710.1"/>
    <property type="molecule type" value="mRNA"/>
</dbReference>
<dbReference type="PIR" id="JC4390">
    <property type="entry name" value="JC4390"/>
</dbReference>
<dbReference type="RefSeq" id="NP_110475.1">
    <property type="nucleotide sequence ID" value="NM_030848.2"/>
</dbReference>
<dbReference type="SMR" id="Q63072"/>
<dbReference type="FunCoup" id="Q63072">
    <property type="interactions" value="6"/>
</dbReference>
<dbReference type="STRING" id="10116.ENSRNOP00000004094"/>
<dbReference type="GlyCosmos" id="Q63072">
    <property type="glycosylation" value="4 sites, No reported glycans"/>
</dbReference>
<dbReference type="GlyGen" id="Q63072">
    <property type="glycosylation" value="4 sites"/>
</dbReference>
<dbReference type="PhosphoSitePlus" id="Q63072"/>
<dbReference type="PaxDb" id="10116-ENSRNOP00000004094"/>
<dbReference type="Ensembl" id="ENSRNOT00000004094.7">
    <property type="protein sequence ID" value="ENSRNOP00000004094.6"/>
    <property type="gene ID" value="ENSRNOG00000003064.7"/>
</dbReference>
<dbReference type="GeneID" id="81506"/>
<dbReference type="KEGG" id="rno:81506"/>
<dbReference type="AGR" id="RGD:620344"/>
<dbReference type="CTD" id="683"/>
<dbReference type="RGD" id="620344">
    <property type="gene designation" value="Bst1"/>
</dbReference>
<dbReference type="eggNOG" id="ENOG502S1HV">
    <property type="taxonomic scope" value="Eukaryota"/>
</dbReference>
<dbReference type="GeneTree" id="ENSGT00390000017291"/>
<dbReference type="InParanoid" id="Q63072"/>
<dbReference type="OMA" id="RCYEYIR"/>
<dbReference type="OrthoDB" id="9944984at2759"/>
<dbReference type="PhylomeDB" id="Q63072"/>
<dbReference type="Reactome" id="R-RNO-163125">
    <property type="pathway name" value="Post-translational modification: synthesis of GPI-anchored proteins"/>
</dbReference>
<dbReference type="Reactome" id="R-RNO-196807">
    <property type="pathway name" value="Nicotinate metabolism"/>
</dbReference>
<dbReference type="Reactome" id="R-RNO-6798695">
    <property type="pathway name" value="Neutrophil degranulation"/>
</dbReference>
<dbReference type="PRO" id="PR:Q63072"/>
<dbReference type="Proteomes" id="UP000002494">
    <property type="component" value="Chromosome 14"/>
</dbReference>
<dbReference type="GO" id="GO:0005886">
    <property type="term" value="C:plasma membrane"/>
    <property type="evidence" value="ECO:0000266"/>
    <property type="project" value="RGD"/>
</dbReference>
<dbReference type="GO" id="GO:0098552">
    <property type="term" value="C:side of membrane"/>
    <property type="evidence" value="ECO:0007669"/>
    <property type="project" value="UniProtKB-KW"/>
</dbReference>
<dbReference type="GO" id="GO:0001931">
    <property type="term" value="C:uropod"/>
    <property type="evidence" value="ECO:0000266"/>
    <property type="project" value="RGD"/>
</dbReference>
<dbReference type="GO" id="GO:0061809">
    <property type="term" value="F:NAD+ nucleosidase activity, cyclic ADP-ribose generating"/>
    <property type="evidence" value="ECO:0000266"/>
    <property type="project" value="RGD"/>
</dbReference>
<dbReference type="GO" id="GO:0016849">
    <property type="term" value="F:phosphorus-oxygen lyase activity"/>
    <property type="evidence" value="ECO:0000318"/>
    <property type="project" value="GO_Central"/>
</dbReference>
<dbReference type="GO" id="GO:0016740">
    <property type="term" value="F:transferase activity"/>
    <property type="evidence" value="ECO:0007669"/>
    <property type="project" value="UniProtKB-KW"/>
</dbReference>
<dbReference type="GO" id="GO:0030890">
    <property type="term" value="P:positive regulation of B cell proliferation"/>
    <property type="evidence" value="ECO:0000318"/>
    <property type="project" value="GO_Central"/>
</dbReference>
<dbReference type="GO" id="GO:0008284">
    <property type="term" value="P:positive regulation of cell population proliferation"/>
    <property type="evidence" value="ECO:0000266"/>
    <property type="project" value="RGD"/>
</dbReference>
<dbReference type="GO" id="GO:0032956">
    <property type="term" value="P:regulation of actin cytoskeleton organization"/>
    <property type="evidence" value="ECO:0000266"/>
    <property type="project" value="RGD"/>
</dbReference>
<dbReference type="GO" id="GO:0050848">
    <property type="term" value="P:regulation of calcium-mediated signaling"/>
    <property type="evidence" value="ECO:0000266"/>
    <property type="project" value="RGD"/>
</dbReference>
<dbReference type="GO" id="GO:0001952">
    <property type="term" value="P:regulation of cell-matrix adhesion"/>
    <property type="evidence" value="ECO:0000266"/>
    <property type="project" value="RGD"/>
</dbReference>
<dbReference type="GO" id="GO:0050727">
    <property type="term" value="P:regulation of inflammatory response"/>
    <property type="evidence" value="ECO:0000266"/>
    <property type="project" value="RGD"/>
</dbReference>
<dbReference type="GO" id="GO:0090022">
    <property type="term" value="P:regulation of neutrophil chemotaxis"/>
    <property type="evidence" value="ECO:0000266"/>
    <property type="project" value="RGD"/>
</dbReference>
<dbReference type="CDD" id="cd04759">
    <property type="entry name" value="Rib_hydrolase"/>
    <property type="match status" value="1"/>
</dbReference>
<dbReference type="Gene3D" id="1.20.82.10">
    <property type="entry name" value="ADP Ribosyl Cyclase, Chain A, domain 1"/>
    <property type="match status" value="1"/>
</dbReference>
<dbReference type="Gene3D" id="3.40.50.720">
    <property type="entry name" value="NAD(P)-binding Rossmann-like Domain"/>
    <property type="match status" value="1"/>
</dbReference>
<dbReference type="InterPro" id="IPR003193">
    <property type="entry name" value="ADP-ribosyl_cyclase"/>
</dbReference>
<dbReference type="PANTHER" id="PTHR10912">
    <property type="entry name" value="ADP-RIBOSYL CYCLASE"/>
    <property type="match status" value="1"/>
</dbReference>
<dbReference type="PANTHER" id="PTHR10912:SF4">
    <property type="entry name" value="ADP-RIBOSYL CYCLASE_CYCLIC ADP-RIBOSE HYDROLASE 2"/>
    <property type="match status" value="1"/>
</dbReference>
<dbReference type="Pfam" id="PF02267">
    <property type="entry name" value="Rib_hydrolayse"/>
    <property type="match status" value="1"/>
</dbReference>
<dbReference type="SUPFAM" id="SSF52309">
    <property type="entry name" value="N-(deoxy)ribosyltransferase-like"/>
    <property type="match status" value="1"/>
</dbReference>
<accession>Q63072</accession>
<reference key="1">
    <citation type="journal article" date="1995" name="Gene">
        <title>Cloning of a cDNA encoding rat bone marrow stromal cell antigen 1 (BST-1) from the islets of Langerhans.</title>
        <authorList>
            <person name="Furuya Y."/>
            <person name="Takasawa S."/>
            <person name="Yonekura H."/>
            <person name="Tanaka T."/>
            <person name="Takahara J."/>
            <person name="Okamoto H."/>
        </authorList>
    </citation>
    <scope>NUCLEOTIDE SEQUENCE [MRNA]</scope>
    <source>
        <strain>Wistar</strain>
        <tissue>Pancreatic islet</tissue>
    </source>
</reference>
<evidence type="ECO:0000250" key="1">
    <source>
        <dbReference type="UniProtKB" id="Q10588"/>
    </source>
</evidence>
<evidence type="ECO:0000255" key="2"/>
<evidence type="ECO:0000305" key="3"/>